<organism>
    <name type="scientific">Chimpanzee hepatitis B virus (isolate United Kingdom/LSH/1988)</name>
    <name type="common">HBVcpz</name>
    <dbReference type="NCBI Taxonomy" id="10414"/>
    <lineage>
        <taxon>Viruses</taxon>
        <taxon>Riboviria</taxon>
        <taxon>Pararnavirae</taxon>
        <taxon>Artverviricota</taxon>
        <taxon>Revtraviricetes</taxon>
        <taxon>Blubervirales</taxon>
        <taxon>Hepadnaviridae</taxon>
        <taxon>Orthohepadnavirus</taxon>
        <taxon>Hepatitis B virus</taxon>
    </lineage>
</organism>
<sequence>MQLFHLCLVISCSCPTVQASKLCLGWL</sequence>
<feature type="chain" id="PRO_0000324735" description="Truncated HBeAg protein">
    <location>
        <begin position="1"/>
        <end position="27"/>
    </location>
</feature>
<protein>
    <recommendedName>
        <fullName>Truncated HBeAg protein</fullName>
    </recommendedName>
</protein>
<organismHost>
    <name type="scientific">Pan troglodytes</name>
    <name type="common">Chimpanzee</name>
    <dbReference type="NCBI Taxonomy" id="9598"/>
</organismHost>
<keyword id="KW-0024">Alternative initiation</keyword>
<reference key="1">
    <citation type="journal article" date="1988" name="J. Gen. Virol.">
        <title>The complete nucleotide sequence of the genome of a hepatitis B virus isolated from a naturally infected chimpanzee.</title>
        <authorList>
            <person name="Vaudin M."/>
            <person name="Wolstenholme A.J."/>
            <person name="Tsiquaye K.N."/>
            <person name="Zuckerman A.J."/>
            <person name="Harrison T.J."/>
        </authorList>
    </citation>
    <scope>NUCLEOTIDE SEQUENCE [GENOMIC DNA]</scope>
</reference>
<name>HBEAG_HBVCP</name>
<proteinExistence type="predicted"/>
<accession>P0C6I7</accession>
<comment type="alternative products">
    <event type="alternative initiation"/>
    <isoform>
        <id>P0C6I7-1</id>
        <name>External core antigen</name>
        <sequence type="displayed"/>
    </isoform>
    <isoform>
        <id>P12901-1</id>
        <name>Capsid protein</name>
        <sequence type="external"/>
    </isoform>
</comment>
<comment type="miscellaneous">
    <text>This virus has been isolated from a persistently infected healthy carrier. A genomic mutation in 1896 creates a stop codon at position 28 of HBeAg, without affecting capsid open reading frame.</text>
</comment>
<dbReference type="EMBL" id="D00220">
    <property type="status" value="NOT_ANNOTATED_CDS"/>
    <property type="molecule type" value="Genomic_DNA"/>
</dbReference>
<dbReference type="Proteomes" id="UP000007928">
    <property type="component" value="Segment"/>
</dbReference>
<dbReference type="GO" id="GO:0005198">
    <property type="term" value="F:structural molecule activity"/>
    <property type="evidence" value="ECO:0007669"/>
    <property type="project" value="InterPro"/>
</dbReference>
<dbReference type="InterPro" id="IPR013195">
    <property type="entry name" value="Hepatitis_B_virus_capsid_N"/>
</dbReference>
<dbReference type="Pfam" id="PF08290">
    <property type="entry name" value="Hep_core_N"/>
    <property type="match status" value="1"/>
</dbReference>
<gene>
    <name type="primary">C</name>
</gene>